<dbReference type="EC" id="4.1.2.13" evidence="4"/>
<dbReference type="EMBL" id="AL022223">
    <property type="protein sequence ID" value="CAA18217.1"/>
    <property type="molecule type" value="Genomic_DNA"/>
</dbReference>
<dbReference type="EMBL" id="AL161565">
    <property type="protein sequence ID" value="CAB79508.1"/>
    <property type="molecule type" value="Genomic_DNA"/>
</dbReference>
<dbReference type="EMBL" id="CP002687">
    <property type="protein sequence ID" value="AEE85214.1"/>
    <property type="molecule type" value="Genomic_DNA"/>
</dbReference>
<dbReference type="EMBL" id="CP002687">
    <property type="protein sequence ID" value="AEE85215.1"/>
    <property type="molecule type" value="Genomic_DNA"/>
</dbReference>
<dbReference type="EMBL" id="CP002687">
    <property type="protein sequence ID" value="ANM66838.1"/>
    <property type="molecule type" value="Genomic_DNA"/>
</dbReference>
<dbReference type="EMBL" id="BT002006">
    <property type="protein sequence ID" value="AAN72017.1"/>
    <property type="molecule type" value="mRNA"/>
</dbReference>
<dbReference type="EMBL" id="BT008844">
    <property type="protein sequence ID" value="AAP68283.1"/>
    <property type="molecule type" value="mRNA"/>
</dbReference>
<dbReference type="EMBL" id="AY087376">
    <property type="protein sequence ID" value="AAM64926.1"/>
    <property type="molecule type" value="mRNA"/>
</dbReference>
<dbReference type="PIR" id="T05051">
    <property type="entry name" value="T05051"/>
</dbReference>
<dbReference type="RefSeq" id="NP_001031721.1">
    <property type="nucleotide sequence ID" value="NM_001036644.2"/>
</dbReference>
<dbReference type="RefSeq" id="NP_001328708.1">
    <property type="nucleotide sequence ID" value="NM_001341809.1"/>
</dbReference>
<dbReference type="RefSeq" id="NP_194383.1">
    <property type="nucleotide sequence ID" value="NM_118786.3"/>
</dbReference>
<dbReference type="SMR" id="O65581"/>
<dbReference type="FunCoup" id="O65581">
    <property type="interactions" value="1972"/>
</dbReference>
<dbReference type="IntAct" id="O65581">
    <property type="interactions" value="3"/>
</dbReference>
<dbReference type="STRING" id="3702.O65581"/>
<dbReference type="GlyGen" id="O65581">
    <property type="glycosylation" value="1 site"/>
</dbReference>
<dbReference type="iPTMnet" id="O65581"/>
<dbReference type="PaxDb" id="3702-AT4G26530.2"/>
<dbReference type="ProMEX" id="O65581"/>
<dbReference type="ProteomicsDB" id="244985"/>
<dbReference type="EnsemblPlants" id="AT4G26530.1">
    <property type="protein sequence ID" value="AT4G26530.1"/>
    <property type="gene ID" value="AT4G26530"/>
</dbReference>
<dbReference type="EnsemblPlants" id="AT4G26530.2">
    <property type="protein sequence ID" value="AT4G26530.2"/>
    <property type="gene ID" value="AT4G26530"/>
</dbReference>
<dbReference type="EnsemblPlants" id="AT4G26530.3">
    <property type="protein sequence ID" value="AT4G26530.3"/>
    <property type="gene ID" value="AT4G26530"/>
</dbReference>
<dbReference type="GeneID" id="828759"/>
<dbReference type="Gramene" id="AT4G26530.1">
    <property type="protein sequence ID" value="AT4G26530.1"/>
    <property type="gene ID" value="AT4G26530"/>
</dbReference>
<dbReference type="Gramene" id="AT4G26530.2">
    <property type="protein sequence ID" value="AT4G26530.2"/>
    <property type="gene ID" value="AT4G26530"/>
</dbReference>
<dbReference type="Gramene" id="AT4G26530.3">
    <property type="protein sequence ID" value="AT4G26530.3"/>
    <property type="gene ID" value="AT4G26530"/>
</dbReference>
<dbReference type="KEGG" id="ath:AT4G26530"/>
<dbReference type="Araport" id="AT4G26530"/>
<dbReference type="TAIR" id="AT4G26530">
    <property type="gene designation" value="FBA5"/>
</dbReference>
<dbReference type="eggNOG" id="KOG1557">
    <property type="taxonomic scope" value="Eukaryota"/>
</dbReference>
<dbReference type="HOGENOM" id="CLU_031243_0_2_1"/>
<dbReference type="InParanoid" id="O65581"/>
<dbReference type="OMA" id="GDAMQKW"/>
<dbReference type="OrthoDB" id="36455at2759"/>
<dbReference type="PhylomeDB" id="O65581"/>
<dbReference type="BioCyc" id="ARA:AT4G26530-MONOMER"/>
<dbReference type="UniPathway" id="UPA00109">
    <property type="reaction ID" value="UER00183"/>
</dbReference>
<dbReference type="CD-CODE" id="4299E36E">
    <property type="entry name" value="Nucleolus"/>
</dbReference>
<dbReference type="PRO" id="PR:O65581"/>
<dbReference type="Proteomes" id="UP000006548">
    <property type="component" value="Chromosome 4"/>
</dbReference>
<dbReference type="ExpressionAtlas" id="O65581">
    <property type="expression patterns" value="baseline and differential"/>
</dbReference>
<dbReference type="GO" id="GO:0005829">
    <property type="term" value="C:cytosol"/>
    <property type="evidence" value="ECO:0007005"/>
    <property type="project" value="TAIR"/>
</dbReference>
<dbReference type="GO" id="GO:0004332">
    <property type="term" value="F:fructose-bisphosphate aldolase activity"/>
    <property type="evidence" value="ECO:0000250"/>
    <property type="project" value="UniProtKB"/>
</dbReference>
<dbReference type="GO" id="GO:0003729">
    <property type="term" value="F:mRNA binding"/>
    <property type="evidence" value="ECO:0000314"/>
    <property type="project" value="TAIR"/>
</dbReference>
<dbReference type="GO" id="GO:0006094">
    <property type="term" value="P:gluconeogenesis"/>
    <property type="evidence" value="ECO:0000250"/>
    <property type="project" value="UniProtKB"/>
</dbReference>
<dbReference type="GO" id="GO:0006096">
    <property type="term" value="P:glycolytic process"/>
    <property type="evidence" value="ECO:0000250"/>
    <property type="project" value="UniProtKB"/>
</dbReference>
<dbReference type="CDD" id="cd00948">
    <property type="entry name" value="FBP_aldolase_I_a"/>
    <property type="match status" value="1"/>
</dbReference>
<dbReference type="FunFam" id="3.20.20.70:FF:000068">
    <property type="entry name" value="Fructose-bisphosphate aldolase"/>
    <property type="match status" value="1"/>
</dbReference>
<dbReference type="Gene3D" id="3.20.20.70">
    <property type="entry name" value="Aldolase class I"/>
    <property type="match status" value="1"/>
</dbReference>
<dbReference type="InterPro" id="IPR029768">
    <property type="entry name" value="Aldolase_I_AS"/>
</dbReference>
<dbReference type="InterPro" id="IPR013785">
    <property type="entry name" value="Aldolase_TIM"/>
</dbReference>
<dbReference type="InterPro" id="IPR000741">
    <property type="entry name" value="FBA_I"/>
</dbReference>
<dbReference type="NCBIfam" id="NF033379">
    <property type="entry name" value="FrucBisAld_I"/>
    <property type="match status" value="1"/>
</dbReference>
<dbReference type="PANTHER" id="PTHR11627">
    <property type="entry name" value="FRUCTOSE-BISPHOSPHATE ALDOLASE"/>
    <property type="match status" value="1"/>
</dbReference>
<dbReference type="Pfam" id="PF00274">
    <property type="entry name" value="Glycolytic"/>
    <property type="match status" value="1"/>
</dbReference>
<dbReference type="SUPFAM" id="SSF51569">
    <property type="entry name" value="Aldolase"/>
    <property type="match status" value="1"/>
</dbReference>
<dbReference type="PROSITE" id="PS00158">
    <property type="entry name" value="ALDOLASE_CLASS_I"/>
    <property type="match status" value="1"/>
</dbReference>
<reference key="1">
    <citation type="journal article" date="1999" name="Nature">
        <title>Sequence and analysis of chromosome 4 of the plant Arabidopsis thaliana.</title>
        <authorList>
            <person name="Mayer K.F.X."/>
            <person name="Schueller C."/>
            <person name="Wambutt R."/>
            <person name="Murphy G."/>
            <person name="Volckaert G."/>
            <person name="Pohl T."/>
            <person name="Duesterhoeft A."/>
            <person name="Stiekema W."/>
            <person name="Entian K.-D."/>
            <person name="Terryn N."/>
            <person name="Harris B."/>
            <person name="Ansorge W."/>
            <person name="Brandt P."/>
            <person name="Grivell L.A."/>
            <person name="Rieger M."/>
            <person name="Weichselgartner M."/>
            <person name="de Simone V."/>
            <person name="Obermaier B."/>
            <person name="Mache R."/>
            <person name="Mueller M."/>
            <person name="Kreis M."/>
            <person name="Delseny M."/>
            <person name="Puigdomenech P."/>
            <person name="Watson M."/>
            <person name="Schmidtheini T."/>
            <person name="Reichert B."/>
            <person name="Portetelle D."/>
            <person name="Perez-Alonso M."/>
            <person name="Boutry M."/>
            <person name="Bancroft I."/>
            <person name="Vos P."/>
            <person name="Hoheisel J."/>
            <person name="Zimmermann W."/>
            <person name="Wedler H."/>
            <person name="Ridley P."/>
            <person name="Langham S.-A."/>
            <person name="McCullagh B."/>
            <person name="Bilham L."/>
            <person name="Robben J."/>
            <person name="van der Schueren J."/>
            <person name="Grymonprez B."/>
            <person name="Chuang Y.-J."/>
            <person name="Vandenbussche F."/>
            <person name="Braeken M."/>
            <person name="Weltjens I."/>
            <person name="Voet M."/>
            <person name="Bastiaens I."/>
            <person name="Aert R."/>
            <person name="Defoor E."/>
            <person name="Weitzenegger T."/>
            <person name="Bothe G."/>
            <person name="Ramsperger U."/>
            <person name="Hilbert H."/>
            <person name="Braun M."/>
            <person name="Holzer E."/>
            <person name="Brandt A."/>
            <person name="Peters S."/>
            <person name="van Staveren M."/>
            <person name="Dirkse W."/>
            <person name="Mooijman P."/>
            <person name="Klein Lankhorst R."/>
            <person name="Rose M."/>
            <person name="Hauf J."/>
            <person name="Koetter P."/>
            <person name="Berneiser S."/>
            <person name="Hempel S."/>
            <person name="Feldpausch M."/>
            <person name="Lamberth S."/>
            <person name="Van den Daele H."/>
            <person name="De Keyser A."/>
            <person name="Buysshaert C."/>
            <person name="Gielen J."/>
            <person name="Villarroel R."/>
            <person name="De Clercq R."/>
            <person name="van Montagu M."/>
            <person name="Rogers J."/>
            <person name="Cronin A."/>
            <person name="Quail M.A."/>
            <person name="Bray-Allen S."/>
            <person name="Clark L."/>
            <person name="Doggett J."/>
            <person name="Hall S."/>
            <person name="Kay M."/>
            <person name="Lennard N."/>
            <person name="McLay K."/>
            <person name="Mayes R."/>
            <person name="Pettett A."/>
            <person name="Rajandream M.A."/>
            <person name="Lyne M."/>
            <person name="Benes V."/>
            <person name="Rechmann S."/>
            <person name="Borkova D."/>
            <person name="Bloecker H."/>
            <person name="Scharfe M."/>
            <person name="Grimm M."/>
            <person name="Loehnert T.-H."/>
            <person name="Dose S."/>
            <person name="de Haan M."/>
            <person name="Maarse A.C."/>
            <person name="Schaefer M."/>
            <person name="Mueller-Auer S."/>
            <person name="Gabel C."/>
            <person name="Fuchs M."/>
            <person name="Fartmann B."/>
            <person name="Granderath K."/>
            <person name="Dauner D."/>
            <person name="Herzl A."/>
            <person name="Neumann S."/>
            <person name="Argiriou A."/>
            <person name="Vitale D."/>
            <person name="Liguori R."/>
            <person name="Piravandi E."/>
            <person name="Massenet O."/>
            <person name="Quigley F."/>
            <person name="Clabauld G."/>
            <person name="Muendlein A."/>
            <person name="Felber R."/>
            <person name="Schnabl S."/>
            <person name="Hiller R."/>
            <person name="Schmidt W."/>
            <person name="Lecharny A."/>
            <person name="Aubourg S."/>
            <person name="Chefdor F."/>
            <person name="Cooke R."/>
            <person name="Berger C."/>
            <person name="Monfort A."/>
            <person name="Casacuberta E."/>
            <person name="Gibbons T."/>
            <person name="Weber N."/>
            <person name="Vandenbol M."/>
            <person name="Bargues M."/>
            <person name="Terol J."/>
            <person name="Torres A."/>
            <person name="Perez-Perez A."/>
            <person name="Purnelle B."/>
            <person name="Bent E."/>
            <person name="Johnson S."/>
            <person name="Tacon D."/>
            <person name="Jesse T."/>
            <person name="Heijnen L."/>
            <person name="Schwarz S."/>
            <person name="Scholler P."/>
            <person name="Heber S."/>
            <person name="Francs P."/>
            <person name="Bielke C."/>
            <person name="Frishman D."/>
            <person name="Haase D."/>
            <person name="Lemcke K."/>
            <person name="Mewes H.-W."/>
            <person name="Stocker S."/>
            <person name="Zaccaria P."/>
            <person name="Bevan M."/>
            <person name="Wilson R.K."/>
            <person name="de la Bastide M."/>
            <person name="Habermann K."/>
            <person name="Parnell L."/>
            <person name="Dedhia N."/>
            <person name="Gnoj L."/>
            <person name="Schutz K."/>
            <person name="Huang E."/>
            <person name="Spiegel L."/>
            <person name="Sekhon M."/>
            <person name="Murray J."/>
            <person name="Sheet P."/>
            <person name="Cordes M."/>
            <person name="Abu-Threideh J."/>
            <person name="Stoneking T."/>
            <person name="Kalicki J."/>
            <person name="Graves T."/>
            <person name="Harmon G."/>
            <person name="Edwards J."/>
            <person name="Latreille P."/>
            <person name="Courtney L."/>
            <person name="Cloud J."/>
            <person name="Abbott A."/>
            <person name="Scott K."/>
            <person name="Johnson D."/>
            <person name="Minx P."/>
            <person name="Bentley D."/>
            <person name="Fulton B."/>
            <person name="Miller N."/>
            <person name="Greco T."/>
            <person name="Kemp K."/>
            <person name="Kramer J."/>
            <person name="Fulton L."/>
            <person name="Mardis E."/>
            <person name="Dante M."/>
            <person name="Pepin K."/>
            <person name="Hillier L.W."/>
            <person name="Nelson J."/>
            <person name="Spieth J."/>
            <person name="Ryan E."/>
            <person name="Andrews S."/>
            <person name="Geisel C."/>
            <person name="Layman D."/>
            <person name="Du H."/>
            <person name="Ali J."/>
            <person name="Berghoff A."/>
            <person name="Jones K."/>
            <person name="Drone K."/>
            <person name="Cotton M."/>
            <person name="Joshu C."/>
            <person name="Antonoiu B."/>
            <person name="Zidanic M."/>
            <person name="Strong C."/>
            <person name="Sun H."/>
            <person name="Lamar B."/>
            <person name="Yordan C."/>
            <person name="Ma P."/>
            <person name="Zhong J."/>
            <person name="Preston R."/>
            <person name="Vil D."/>
            <person name="Shekher M."/>
            <person name="Matero A."/>
            <person name="Shah R."/>
            <person name="Swaby I.K."/>
            <person name="O'Shaughnessy A."/>
            <person name="Rodriguez M."/>
            <person name="Hoffman J."/>
            <person name="Till S."/>
            <person name="Granat S."/>
            <person name="Shohdy N."/>
            <person name="Hasegawa A."/>
            <person name="Hameed A."/>
            <person name="Lodhi M."/>
            <person name="Johnson A."/>
            <person name="Chen E."/>
            <person name="Marra M.A."/>
            <person name="Martienssen R."/>
            <person name="McCombie W.R."/>
        </authorList>
    </citation>
    <scope>NUCLEOTIDE SEQUENCE [LARGE SCALE GENOMIC DNA]</scope>
    <source>
        <strain>cv. Columbia</strain>
    </source>
</reference>
<reference key="2">
    <citation type="journal article" date="2017" name="Plant J.">
        <title>Araport11: a complete reannotation of the Arabidopsis thaliana reference genome.</title>
        <authorList>
            <person name="Cheng C.Y."/>
            <person name="Krishnakumar V."/>
            <person name="Chan A.P."/>
            <person name="Thibaud-Nissen F."/>
            <person name="Schobel S."/>
            <person name="Town C.D."/>
        </authorList>
    </citation>
    <scope>GENOME REANNOTATION</scope>
    <source>
        <strain>cv. Columbia</strain>
    </source>
</reference>
<reference key="3">
    <citation type="journal article" date="2003" name="Science">
        <title>Empirical analysis of transcriptional activity in the Arabidopsis genome.</title>
        <authorList>
            <person name="Yamada K."/>
            <person name="Lim J."/>
            <person name="Dale J.M."/>
            <person name="Chen H."/>
            <person name="Shinn P."/>
            <person name="Palm C.J."/>
            <person name="Southwick A.M."/>
            <person name="Wu H.C."/>
            <person name="Kim C.J."/>
            <person name="Nguyen M."/>
            <person name="Pham P.K."/>
            <person name="Cheuk R.F."/>
            <person name="Karlin-Newmann G."/>
            <person name="Liu S.X."/>
            <person name="Lam B."/>
            <person name="Sakano H."/>
            <person name="Wu T."/>
            <person name="Yu G."/>
            <person name="Miranda M."/>
            <person name="Quach H.L."/>
            <person name="Tripp M."/>
            <person name="Chang C.H."/>
            <person name="Lee J.M."/>
            <person name="Toriumi M.J."/>
            <person name="Chan M.M."/>
            <person name="Tang C.C."/>
            <person name="Onodera C.S."/>
            <person name="Deng J.M."/>
            <person name="Akiyama K."/>
            <person name="Ansari Y."/>
            <person name="Arakawa T."/>
            <person name="Banh J."/>
            <person name="Banno F."/>
            <person name="Bowser L."/>
            <person name="Brooks S.Y."/>
            <person name="Carninci P."/>
            <person name="Chao Q."/>
            <person name="Choy N."/>
            <person name="Enju A."/>
            <person name="Goldsmith A.D."/>
            <person name="Gurjal M."/>
            <person name="Hansen N.F."/>
            <person name="Hayashizaki Y."/>
            <person name="Johnson-Hopson C."/>
            <person name="Hsuan V.W."/>
            <person name="Iida K."/>
            <person name="Karnes M."/>
            <person name="Khan S."/>
            <person name="Koesema E."/>
            <person name="Ishida J."/>
            <person name="Jiang P.X."/>
            <person name="Jones T."/>
            <person name="Kawai J."/>
            <person name="Kamiya A."/>
            <person name="Meyers C."/>
            <person name="Nakajima M."/>
            <person name="Narusaka M."/>
            <person name="Seki M."/>
            <person name="Sakurai T."/>
            <person name="Satou M."/>
            <person name="Tamse R."/>
            <person name="Vaysberg M."/>
            <person name="Wallender E.K."/>
            <person name="Wong C."/>
            <person name="Yamamura Y."/>
            <person name="Yuan S."/>
            <person name="Shinozaki K."/>
            <person name="Davis R.W."/>
            <person name="Theologis A."/>
            <person name="Ecker J.R."/>
        </authorList>
    </citation>
    <scope>NUCLEOTIDE SEQUENCE [LARGE SCALE MRNA]</scope>
    <source>
        <strain>cv. Columbia</strain>
    </source>
</reference>
<reference key="4">
    <citation type="submission" date="2002-03" db="EMBL/GenBank/DDBJ databases">
        <title>Full-length cDNA from Arabidopsis thaliana.</title>
        <authorList>
            <person name="Brover V.V."/>
            <person name="Troukhan M.E."/>
            <person name="Alexandrov N.A."/>
            <person name="Lu Y.-P."/>
            <person name="Flavell R.B."/>
            <person name="Feldmann K.A."/>
        </authorList>
    </citation>
    <scope>NUCLEOTIDE SEQUENCE [LARGE SCALE MRNA]</scope>
</reference>
<reference key="5">
    <citation type="journal article" date="2004" name="Proteomics">
        <title>New targets of Arabidopsis thioredoxins revealed by proteomic analysis.</title>
        <authorList>
            <person name="Marchand C."/>
            <person name="Le Marechal P."/>
            <person name="Meyer Y."/>
            <person name="Miginiac-Maslow M."/>
            <person name="Issakidis-Bourguet E."/>
            <person name="Decottignies P."/>
        </authorList>
    </citation>
    <scope>IDENTIFICATION BY MASS SPECTROMETRY</scope>
    <scope>INTERACTION WITH TRX3</scope>
</reference>
<reference key="6">
    <citation type="journal article" date="2006" name="Biochimie">
        <title>Genome-wide transcriptome profiling of the early cadmium response of Arabidopsis roots and shoots.</title>
        <authorList>
            <person name="Herbette S."/>
            <person name="Taconnat L."/>
            <person name="Hugouvieux V."/>
            <person name="Piette L."/>
            <person name="Magniette M.L."/>
            <person name="Cuine S."/>
            <person name="Auroy P."/>
            <person name="Richaud P."/>
            <person name="Forestier C."/>
            <person name="Bourguignon J."/>
            <person name="Renou J.P."/>
            <person name="Vavasseur A."/>
            <person name="Leonhardt N."/>
        </authorList>
    </citation>
    <scope>INDUCTION</scope>
</reference>
<reference key="7">
    <citation type="journal article" date="2012" name="Gene">
        <title>Identification and characterization of fructose 1,6-bisphosphate aldolase genes in Arabidopsis reveal a gene family with diverse responses to abiotic stresses.</title>
        <authorList>
            <person name="Lu W."/>
            <person name="Tang X."/>
            <person name="Huo Y."/>
            <person name="Xu R."/>
            <person name="Qi S."/>
            <person name="Huang J."/>
            <person name="Zheng C."/>
            <person name="Wu C.A."/>
        </authorList>
    </citation>
    <scope>TISSUE SPECIFICITY</scope>
    <scope>INDUCTION</scope>
    <scope>GENE FAMILY</scope>
    <scope>NOMENCLATURE</scope>
</reference>
<accession>O65581</accession>
<name>ALFC5_ARATH</name>
<gene>
    <name evidence="8" type="primary">FBA5</name>
    <name evidence="10" type="ordered locus">At4g26530</name>
    <name evidence="11" type="ORF">M3E9.40</name>
</gene>
<feature type="initiator methionine" description="Removed" evidence="3">
    <location>
        <position position="1"/>
    </location>
</feature>
<feature type="chain" id="PRO_0000437239" description="Fructose-bisphosphate aldolase 5, cytosolic">
    <location>
        <begin position="2"/>
        <end position="358"/>
    </location>
</feature>
<feature type="active site" description="Proton acceptor" evidence="1">
    <location>
        <position position="183"/>
    </location>
</feature>
<feature type="active site" description="Schiff-base intermediate with dihydroxyacetone-P" evidence="1">
    <location>
        <position position="225"/>
    </location>
</feature>
<feature type="binding site" evidence="1">
    <location>
        <position position="39"/>
    </location>
    <ligand>
        <name>substrate</name>
    </ligand>
</feature>
<feature type="binding site" evidence="1">
    <location>
        <begin position="266"/>
        <end position="268"/>
    </location>
    <ligand>
        <name>substrate</name>
    </ligand>
</feature>
<feature type="binding site" evidence="1">
    <location>
        <position position="298"/>
    </location>
    <ligand>
        <name>substrate</name>
    </ligand>
</feature>
<feature type="site" description="Necessary for preference for fructose 1,6-bisphosphate over fructose 1-phosphate" evidence="1">
    <location>
        <position position="358"/>
    </location>
</feature>
<feature type="modified residue" description="N-acetylserine" evidence="3">
    <location>
        <position position="2"/>
    </location>
</feature>
<feature type="modified residue" description="S-glutathionyl cysteine; transient" evidence="4">
    <location>
        <position position="68"/>
    </location>
</feature>
<feature type="modified residue" description="S-glutathionyl cysteine; transient; alternate" evidence="4">
    <location>
        <position position="173"/>
    </location>
</feature>
<feature type="modified residue" description="S-nitrosocysteine; transient; alternate" evidence="4">
    <location>
        <position position="173"/>
    </location>
</feature>
<feature type="modified residue" description="Phosphoserine" evidence="3">
    <location>
        <position position="350"/>
    </location>
</feature>
<keyword id="KW-0007">Acetylation</keyword>
<keyword id="KW-0963">Cytoplasm</keyword>
<keyword id="KW-0318">Glutathionylation</keyword>
<keyword id="KW-0324">Glycolysis</keyword>
<keyword id="KW-0456">Lyase</keyword>
<keyword id="KW-0597">Phosphoprotein</keyword>
<keyword id="KW-1185">Reference proteome</keyword>
<keyword id="KW-0702">S-nitrosylation</keyword>
<keyword id="KW-0704">Schiff base</keyword>
<organism>
    <name type="scientific">Arabidopsis thaliana</name>
    <name type="common">Mouse-ear cress</name>
    <dbReference type="NCBI Taxonomy" id="3702"/>
    <lineage>
        <taxon>Eukaryota</taxon>
        <taxon>Viridiplantae</taxon>
        <taxon>Streptophyta</taxon>
        <taxon>Embryophyta</taxon>
        <taxon>Tracheophyta</taxon>
        <taxon>Spermatophyta</taxon>
        <taxon>Magnoliopsida</taxon>
        <taxon>eudicotyledons</taxon>
        <taxon>Gunneridae</taxon>
        <taxon>Pentapetalae</taxon>
        <taxon>rosids</taxon>
        <taxon>malvids</taxon>
        <taxon>Brassicales</taxon>
        <taxon>Brassicaceae</taxon>
        <taxon>Camelineae</taxon>
        <taxon>Arabidopsis</taxon>
    </lineage>
</organism>
<protein>
    <recommendedName>
        <fullName evidence="9">Fructose-bisphosphate aldolase 5, cytosolic</fullName>
        <shortName evidence="8">AtFBA5</shortName>
        <ecNumber evidence="4">4.1.2.13</ecNumber>
    </recommendedName>
</protein>
<sequence length="358" mass="38294">MSAFVGKYADELIKTAKYIATPGKGILAADESTGTIGKRFASINVENIESNRQALRELLFTSPGTFPCLSGVILFEETLYQKTTDGKPFVELLMENGVIPGIKVDKGVVDLAGTNGETTTQGLDSLGARCQEYYKAGARFAKWRAVLKIGATEPSELSIQENAKGLARYAIICQENGLVPIVEPEVLTDGSHDIKKCAAVTETVLAAVYKALNDHHVLLEGTLLKPNMVTPGSDSPKVAPEVIAEYTVTALRRTVPPAVPGIVFLSGGQSEEEATLNLNAMNKLDVLKPWTLTFSFGRALQQSTLKAWAGKTENVAKAQATFLTRCKGNSDATLGKYTGGASGDSAASESLYEEGYKY</sequence>
<proteinExistence type="evidence at protein level"/>
<comment type="function">
    <text evidence="4">Fructose-bisphosphate aldolase that plays a key role in glycolysis and gluconeogenesis.</text>
</comment>
<comment type="catalytic activity">
    <reaction evidence="4">
        <text>beta-D-fructose 1,6-bisphosphate = D-glyceraldehyde 3-phosphate + dihydroxyacetone phosphate</text>
        <dbReference type="Rhea" id="RHEA:14729"/>
        <dbReference type="ChEBI" id="CHEBI:32966"/>
        <dbReference type="ChEBI" id="CHEBI:57642"/>
        <dbReference type="ChEBI" id="CHEBI:59776"/>
        <dbReference type="EC" id="4.1.2.13"/>
    </reaction>
</comment>
<comment type="pathway">
    <text evidence="9">Carbohydrate degradation; glycolysis; D-glyceraldehyde 3-phosphate and glycerone phosphate from D-glucose: step 4/4.</text>
</comment>
<comment type="subunit">
    <text evidence="2 5">Homotetramer (By similarity). Interacts with TRX3 (PubMed:15352244).</text>
</comment>
<comment type="subcellular location">
    <subcellularLocation>
        <location evidence="4">Cytoplasm</location>
        <location evidence="4">Cytosol</location>
    </subcellularLocation>
</comment>
<comment type="tissue specificity">
    <text evidence="7">Expressed in rosette leaves and cauline leaves.</text>
</comment>
<comment type="induction">
    <text evidence="6 7">Down-regulated by cadmium (PubMed:16797112). Induced by sucrose (PubMed:22561114). Induced by abiotic stresses (PubMed:22561114).</text>
</comment>
<comment type="PTM">
    <text evidence="4">S-glutathionylated at Cys-68 and Cys-173.</text>
</comment>
<comment type="PTM">
    <text evidence="4">S-nitrosylated at Cys-173.</text>
</comment>
<comment type="similarity">
    <text evidence="9">Belongs to the class I fructose-bisphosphate aldolase family.</text>
</comment>
<evidence type="ECO:0000250" key="1">
    <source>
        <dbReference type="UniProtKB" id="P00883"/>
    </source>
</evidence>
<evidence type="ECO:0000250" key="2">
    <source>
        <dbReference type="UniProtKB" id="Q944G9"/>
    </source>
</evidence>
<evidence type="ECO:0000250" key="3">
    <source>
        <dbReference type="UniProtKB" id="Q9LF98"/>
    </source>
</evidence>
<evidence type="ECO:0000250" key="4">
    <source>
        <dbReference type="UniProtKB" id="Q9SJQ9"/>
    </source>
</evidence>
<evidence type="ECO:0000269" key="5">
    <source>
    </source>
</evidence>
<evidence type="ECO:0000269" key="6">
    <source>
    </source>
</evidence>
<evidence type="ECO:0000269" key="7">
    <source>
    </source>
</evidence>
<evidence type="ECO:0000303" key="8">
    <source>
    </source>
</evidence>
<evidence type="ECO:0000305" key="9"/>
<evidence type="ECO:0000312" key="10">
    <source>
        <dbReference type="Araport" id="AT4G26530"/>
    </source>
</evidence>
<evidence type="ECO:0000312" key="11">
    <source>
        <dbReference type="EMBL" id="CAA18217.1"/>
    </source>
</evidence>